<name>CLPX_STRR6</name>
<gene>
    <name evidence="1" type="primary">clpX</name>
    <name type="ordered locus">spr1427</name>
</gene>
<dbReference type="EMBL" id="AE007317">
    <property type="protein sequence ID" value="AAL00231.1"/>
    <property type="molecule type" value="Genomic_DNA"/>
</dbReference>
<dbReference type="PIR" id="B98050">
    <property type="entry name" value="B98050"/>
</dbReference>
<dbReference type="RefSeq" id="NP_359020.1">
    <property type="nucleotide sequence ID" value="NC_003098.1"/>
</dbReference>
<dbReference type="RefSeq" id="WP_000106346.1">
    <property type="nucleotide sequence ID" value="NC_003098.1"/>
</dbReference>
<dbReference type="SMR" id="P63792"/>
<dbReference type="STRING" id="171101.spr1427"/>
<dbReference type="GeneID" id="45653193"/>
<dbReference type="KEGG" id="spr:spr1427"/>
<dbReference type="PATRIC" id="fig|171101.6.peg.1542"/>
<dbReference type="eggNOG" id="COG1219">
    <property type="taxonomic scope" value="Bacteria"/>
</dbReference>
<dbReference type="HOGENOM" id="CLU_014218_8_2_9"/>
<dbReference type="Proteomes" id="UP000000586">
    <property type="component" value="Chromosome"/>
</dbReference>
<dbReference type="GO" id="GO:0009376">
    <property type="term" value="C:HslUV protease complex"/>
    <property type="evidence" value="ECO:0000318"/>
    <property type="project" value="GO_Central"/>
</dbReference>
<dbReference type="GO" id="GO:0005524">
    <property type="term" value="F:ATP binding"/>
    <property type="evidence" value="ECO:0000318"/>
    <property type="project" value="GO_Central"/>
</dbReference>
<dbReference type="GO" id="GO:0016887">
    <property type="term" value="F:ATP hydrolysis activity"/>
    <property type="evidence" value="ECO:0000318"/>
    <property type="project" value="GO_Central"/>
</dbReference>
<dbReference type="GO" id="GO:0140662">
    <property type="term" value="F:ATP-dependent protein folding chaperone"/>
    <property type="evidence" value="ECO:0007669"/>
    <property type="project" value="InterPro"/>
</dbReference>
<dbReference type="GO" id="GO:0046983">
    <property type="term" value="F:protein dimerization activity"/>
    <property type="evidence" value="ECO:0007669"/>
    <property type="project" value="InterPro"/>
</dbReference>
<dbReference type="GO" id="GO:0051082">
    <property type="term" value="F:unfolded protein binding"/>
    <property type="evidence" value="ECO:0007669"/>
    <property type="project" value="UniProtKB-UniRule"/>
</dbReference>
<dbReference type="GO" id="GO:0008270">
    <property type="term" value="F:zinc ion binding"/>
    <property type="evidence" value="ECO:0007669"/>
    <property type="project" value="InterPro"/>
</dbReference>
<dbReference type="GO" id="GO:0051301">
    <property type="term" value="P:cell division"/>
    <property type="evidence" value="ECO:0000318"/>
    <property type="project" value="GO_Central"/>
</dbReference>
<dbReference type="GO" id="GO:0051603">
    <property type="term" value="P:proteolysis involved in protein catabolic process"/>
    <property type="evidence" value="ECO:0000318"/>
    <property type="project" value="GO_Central"/>
</dbReference>
<dbReference type="CDD" id="cd19497">
    <property type="entry name" value="RecA-like_ClpX"/>
    <property type="match status" value="1"/>
</dbReference>
<dbReference type="FunFam" id="1.10.8.60:FF:000002">
    <property type="entry name" value="ATP-dependent Clp protease ATP-binding subunit ClpX"/>
    <property type="match status" value="1"/>
</dbReference>
<dbReference type="FunFam" id="3.40.50.300:FF:000005">
    <property type="entry name" value="ATP-dependent Clp protease ATP-binding subunit ClpX"/>
    <property type="match status" value="1"/>
</dbReference>
<dbReference type="Gene3D" id="1.10.8.60">
    <property type="match status" value="1"/>
</dbReference>
<dbReference type="Gene3D" id="6.20.220.10">
    <property type="entry name" value="ClpX chaperone, C4-type zinc finger domain"/>
    <property type="match status" value="1"/>
</dbReference>
<dbReference type="Gene3D" id="3.40.50.300">
    <property type="entry name" value="P-loop containing nucleotide triphosphate hydrolases"/>
    <property type="match status" value="1"/>
</dbReference>
<dbReference type="HAMAP" id="MF_00175">
    <property type="entry name" value="ClpX"/>
    <property type="match status" value="1"/>
</dbReference>
<dbReference type="InterPro" id="IPR003593">
    <property type="entry name" value="AAA+_ATPase"/>
</dbReference>
<dbReference type="InterPro" id="IPR050052">
    <property type="entry name" value="ATP-dep_Clp_protease_ClpX"/>
</dbReference>
<dbReference type="InterPro" id="IPR003959">
    <property type="entry name" value="ATPase_AAA_core"/>
</dbReference>
<dbReference type="InterPro" id="IPR019489">
    <property type="entry name" value="Clp_ATPase_C"/>
</dbReference>
<dbReference type="InterPro" id="IPR004487">
    <property type="entry name" value="Clp_protease_ATP-bd_su_ClpX"/>
</dbReference>
<dbReference type="InterPro" id="IPR046425">
    <property type="entry name" value="ClpX_bact"/>
</dbReference>
<dbReference type="InterPro" id="IPR027417">
    <property type="entry name" value="P-loop_NTPase"/>
</dbReference>
<dbReference type="InterPro" id="IPR010603">
    <property type="entry name" value="Znf_CppX_C4"/>
</dbReference>
<dbReference type="InterPro" id="IPR038366">
    <property type="entry name" value="Znf_CppX_C4_sf"/>
</dbReference>
<dbReference type="NCBIfam" id="TIGR00382">
    <property type="entry name" value="clpX"/>
    <property type="match status" value="1"/>
</dbReference>
<dbReference type="NCBIfam" id="NF003745">
    <property type="entry name" value="PRK05342.1"/>
    <property type="match status" value="1"/>
</dbReference>
<dbReference type="PANTHER" id="PTHR48102:SF7">
    <property type="entry name" value="ATP-DEPENDENT CLP PROTEASE ATP-BINDING SUBUNIT CLPX-LIKE, MITOCHONDRIAL"/>
    <property type="match status" value="1"/>
</dbReference>
<dbReference type="PANTHER" id="PTHR48102">
    <property type="entry name" value="ATP-DEPENDENT CLP PROTEASE ATP-BINDING SUBUNIT CLPX-LIKE, MITOCHONDRIAL-RELATED"/>
    <property type="match status" value="1"/>
</dbReference>
<dbReference type="Pfam" id="PF07724">
    <property type="entry name" value="AAA_2"/>
    <property type="match status" value="1"/>
</dbReference>
<dbReference type="Pfam" id="PF10431">
    <property type="entry name" value="ClpB_D2-small"/>
    <property type="match status" value="1"/>
</dbReference>
<dbReference type="Pfam" id="PF06689">
    <property type="entry name" value="zf-C4_ClpX"/>
    <property type="match status" value="1"/>
</dbReference>
<dbReference type="SMART" id="SM00382">
    <property type="entry name" value="AAA"/>
    <property type="match status" value="1"/>
</dbReference>
<dbReference type="SMART" id="SM01086">
    <property type="entry name" value="ClpB_D2-small"/>
    <property type="match status" value="1"/>
</dbReference>
<dbReference type="SMART" id="SM00994">
    <property type="entry name" value="zf-C4_ClpX"/>
    <property type="match status" value="1"/>
</dbReference>
<dbReference type="SUPFAM" id="SSF57716">
    <property type="entry name" value="Glucocorticoid receptor-like (DNA-binding domain)"/>
    <property type="match status" value="1"/>
</dbReference>
<dbReference type="SUPFAM" id="SSF52540">
    <property type="entry name" value="P-loop containing nucleoside triphosphate hydrolases"/>
    <property type="match status" value="1"/>
</dbReference>
<dbReference type="PROSITE" id="PS51902">
    <property type="entry name" value="CLPX_ZB"/>
    <property type="match status" value="1"/>
</dbReference>
<feature type="chain" id="PRO_0000160433" description="ATP-dependent Clp protease ATP-binding subunit ClpX">
    <location>
        <begin position="1"/>
        <end position="410"/>
    </location>
</feature>
<feature type="domain" description="ClpX-type ZB" evidence="2">
    <location>
        <begin position="1"/>
        <end position="54"/>
    </location>
</feature>
<feature type="binding site" evidence="2">
    <location>
        <position position="13"/>
    </location>
    <ligand>
        <name>Zn(2+)</name>
        <dbReference type="ChEBI" id="CHEBI:29105"/>
    </ligand>
</feature>
<feature type="binding site" evidence="2">
    <location>
        <position position="16"/>
    </location>
    <ligand>
        <name>Zn(2+)</name>
        <dbReference type="ChEBI" id="CHEBI:29105"/>
    </ligand>
</feature>
<feature type="binding site" evidence="2">
    <location>
        <position position="35"/>
    </location>
    <ligand>
        <name>Zn(2+)</name>
        <dbReference type="ChEBI" id="CHEBI:29105"/>
    </ligand>
</feature>
<feature type="binding site" evidence="2">
    <location>
        <position position="38"/>
    </location>
    <ligand>
        <name>Zn(2+)</name>
        <dbReference type="ChEBI" id="CHEBI:29105"/>
    </ligand>
</feature>
<feature type="binding site" evidence="1">
    <location>
        <begin position="120"/>
        <end position="127"/>
    </location>
    <ligand>
        <name>ATP</name>
        <dbReference type="ChEBI" id="CHEBI:30616"/>
    </ligand>
</feature>
<reference key="1">
    <citation type="journal article" date="2001" name="J. Bacteriol.">
        <title>Genome of the bacterium Streptococcus pneumoniae strain R6.</title>
        <authorList>
            <person name="Hoskins J."/>
            <person name="Alborn W.E. Jr."/>
            <person name="Arnold J."/>
            <person name="Blaszczak L.C."/>
            <person name="Burgett S."/>
            <person name="DeHoff B.S."/>
            <person name="Estrem S.T."/>
            <person name="Fritz L."/>
            <person name="Fu D.-J."/>
            <person name="Fuller W."/>
            <person name="Geringer C."/>
            <person name="Gilmour R."/>
            <person name="Glass J.S."/>
            <person name="Khoja H."/>
            <person name="Kraft A.R."/>
            <person name="Lagace R.E."/>
            <person name="LeBlanc D.J."/>
            <person name="Lee L.N."/>
            <person name="Lefkowitz E.J."/>
            <person name="Lu J."/>
            <person name="Matsushima P."/>
            <person name="McAhren S.M."/>
            <person name="McHenney M."/>
            <person name="McLeaster K."/>
            <person name="Mundy C.W."/>
            <person name="Nicas T.I."/>
            <person name="Norris F.H."/>
            <person name="O'Gara M."/>
            <person name="Peery R.B."/>
            <person name="Robertson G.T."/>
            <person name="Rockey P."/>
            <person name="Sun P.-M."/>
            <person name="Winkler M.E."/>
            <person name="Yang Y."/>
            <person name="Young-Bellido M."/>
            <person name="Zhao G."/>
            <person name="Zook C.A."/>
            <person name="Baltz R.H."/>
            <person name="Jaskunas S.R."/>
            <person name="Rosteck P.R. Jr."/>
            <person name="Skatrud P.L."/>
            <person name="Glass J.I."/>
        </authorList>
    </citation>
    <scope>NUCLEOTIDE SEQUENCE [LARGE SCALE GENOMIC DNA]</scope>
    <source>
        <strain>ATCC BAA-255 / R6</strain>
    </source>
</reference>
<comment type="function">
    <text evidence="1">ATP-dependent specificity component of the Clp protease. It directs the protease to specific substrates. Can perform chaperone functions in the absence of ClpP.</text>
</comment>
<comment type="subunit">
    <text evidence="1">Component of the ClpX-ClpP complex. Forms a hexameric ring that, in the presence of ATP, binds to fourteen ClpP subunits assembled into a disk-like structure with a central cavity, resembling the structure of eukaryotic proteasomes.</text>
</comment>
<comment type="similarity">
    <text evidence="1">Belongs to the ClpX chaperone family.</text>
</comment>
<keyword id="KW-0067">ATP-binding</keyword>
<keyword id="KW-0143">Chaperone</keyword>
<keyword id="KW-0479">Metal-binding</keyword>
<keyword id="KW-0547">Nucleotide-binding</keyword>
<keyword id="KW-1185">Reference proteome</keyword>
<keyword id="KW-0862">Zinc</keyword>
<sequence length="410" mass="45798">MSTNRKNDMMVYCSFCGKNQEEVQKIIAGNNAFICNECVELAQEIIREELVEEVLADLSEVPKPIELLHILNHYVIGQDRAKRALAVAVYNHYKRINFHDTREESEDVDLQKSNILMIGPTGSGKTFLAQTLAKSLNVPFAIADATALTEAGYVGEDVENILLKLLQVADFNIERAERGIIYVDEIDKIAKKSENVSITRDVSGEGVQQALLKIIEGTVASVPPQGGRKHPQQEMIQVDTKNILFIVGGAFDGIEEIVKQRLGEKVIGFGQNNKAIDENSSYMQEIIAEDIQKFGIIPELIGRLPVFAALEQLTVDDLVRILKEPRNALVKQYQTLLSYDDVELEFDDEALQEIANKAIERKTGARGLRSIIEETMLDVMFEVPSQENVKLVRITKETVDGTDKPILETA</sequence>
<evidence type="ECO:0000255" key="1">
    <source>
        <dbReference type="HAMAP-Rule" id="MF_00175"/>
    </source>
</evidence>
<evidence type="ECO:0000255" key="2">
    <source>
        <dbReference type="PROSITE-ProRule" id="PRU01250"/>
    </source>
</evidence>
<protein>
    <recommendedName>
        <fullName evidence="1">ATP-dependent Clp protease ATP-binding subunit ClpX</fullName>
    </recommendedName>
</protein>
<proteinExistence type="inferred from homology"/>
<accession>P63792</accession>
<accession>Q97PN4</accession>
<organism>
    <name type="scientific">Streptococcus pneumoniae (strain ATCC BAA-255 / R6)</name>
    <dbReference type="NCBI Taxonomy" id="171101"/>
    <lineage>
        <taxon>Bacteria</taxon>
        <taxon>Bacillati</taxon>
        <taxon>Bacillota</taxon>
        <taxon>Bacilli</taxon>
        <taxon>Lactobacillales</taxon>
        <taxon>Streptococcaceae</taxon>
        <taxon>Streptococcus</taxon>
    </lineage>
</organism>